<keyword id="KW-0067">ATP-binding</keyword>
<keyword id="KW-0436">Ligase</keyword>
<keyword id="KW-0547">Nucleotide-binding</keyword>
<keyword id="KW-0658">Purine biosynthesis</keyword>
<keyword id="KW-1185">Reference proteome</keyword>
<name>PUR7_AROAE</name>
<reference key="1">
    <citation type="journal article" date="2005" name="Arch. Microbiol.">
        <title>The genome sequence of an anaerobic aromatic-degrading denitrifying bacterium, strain EbN1.</title>
        <authorList>
            <person name="Rabus R."/>
            <person name="Kube M."/>
            <person name="Heider J."/>
            <person name="Beck A."/>
            <person name="Heitmann K."/>
            <person name="Widdel F."/>
            <person name="Reinhardt R."/>
        </authorList>
    </citation>
    <scope>NUCLEOTIDE SEQUENCE [LARGE SCALE GENOMIC DNA]</scope>
    <source>
        <strain>DSM 19018 / LMG 30748 / EbN1</strain>
    </source>
</reference>
<organism>
    <name type="scientific">Aromatoleum aromaticum (strain DSM 19018 / LMG 30748 / EbN1)</name>
    <name type="common">Azoarcus sp. (strain EbN1)</name>
    <dbReference type="NCBI Taxonomy" id="76114"/>
    <lineage>
        <taxon>Bacteria</taxon>
        <taxon>Pseudomonadati</taxon>
        <taxon>Pseudomonadota</taxon>
        <taxon>Betaproteobacteria</taxon>
        <taxon>Rhodocyclales</taxon>
        <taxon>Rhodocyclaceae</taxon>
        <taxon>Aromatoleum</taxon>
    </lineage>
</organism>
<sequence>MAQPLFESTIKSLPLLGRGKVRDIYAVDADKLLIVTSDRLSAFDVILPDPIPDKGRVLTAMAAFWFARLGHIVPNQLTGIDPESVVASDERDQVRGRSLVVKRLKPLPIEAVVRGYVIGSGWKDYQDTGAICGIRLPAGLAQAAKLPSPIFTPASKADVGDHDENISFAAAQTRCAAELTGLLAGSGTNGARLATEARDAAITLYVEAANYAAGRGIIIADTKFEFGIDSAGTLHLIDEALTPDSSRFWPADSYREGISPPSYDKQYVRDYLETLTWGKKAPGPHLPADVIAKTAAKYREAFERLTGQSLA</sequence>
<evidence type="ECO:0000255" key="1">
    <source>
        <dbReference type="HAMAP-Rule" id="MF_00137"/>
    </source>
</evidence>
<protein>
    <recommendedName>
        <fullName evidence="1">Phosphoribosylaminoimidazole-succinocarboxamide synthase</fullName>
        <ecNumber evidence="1">6.3.2.6</ecNumber>
    </recommendedName>
    <alternativeName>
        <fullName evidence="1">SAICAR synthetase</fullName>
    </alternativeName>
</protein>
<comment type="catalytic activity">
    <reaction evidence="1">
        <text>5-amino-1-(5-phospho-D-ribosyl)imidazole-4-carboxylate + L-aspartate + ATP = (2S)-2-[5-amino-1-(5-phospho-beta-D-ribosyl)imidazole-4-carboxamido]succinate + ADP + phosphate + 2 H(+)</text>
        <dbReference type="Rhea" id="RHEA:22628"/>
        <dbReference type="ChEBI" id="CHEBI:15378"/>
        <dbReference type="ChEBI" id="CHEBI:29991"/>
        <dbReference type="ChEBI" id="CHEBI:30616"/>
        <dbReference type="ChEBI" id="CHEBI:43474"/>
        <dbReference type="ChEBI" id="CHEBI:58443"/>
        <dbReference type="ChEBI" id="CHEBI:77657"/>
        <dbReference type="ChEBI" id="CHEBI:456216"/>
        <dbReference type="EC" id="6.3.2.6"/>
    </reaction>
</comment>
<comment type="pathway">
    <text evidence="1">Purine metabolism; IMP biosynthesis via de novo pathway; 5-amino-1-(5-phospho-D-ribosyl)imidazole-4-carboxamide from 5-amino-1-(5-phospho-D-ribosyl)imidazole-4-carboxylate: step 1/2.</text>
</comment>
<comment type="similarity">
    <text evidence="1">Belongs to the SAICAR synthetase family.</text>
</comment>
<proteinExistence type="inferred from homology"/>
<gene>
    <name evidence="1" type="primary">purC</name>
    <name type="ordered locus">AZOSEA05920</name>
    <name type="ORF">ebA1125</name>
</gene>
<dbReference type="EC" id="6.3.2.6" evidence="1"/>
<dbReference type="EMBL" id="CR555306">
    <property type="protein sequence ID" value="CAI06714.1"/>
    <property type="molecule type" value="Genomic_DNA"/>
</dbReference>
<dbReference type="RefSeq" id="WP_011236444.1">
    <property type="nucleotide sequence ID" value="NC_006513.1"/>
</dbReference>
<dbReference type="SMR" id="Q5P7J7"/>
<dbReference type="STRING" id="76114.ebA1125"/>
<dbReference type="KEGG" id="eba:ebA1125"/>
<dbReference type="eggNOG" id="COG0152">
    <property type="taxonomic scope" value="Bacteria"/>
</dbReference>
<dbReference type="HOGENOM" id="CLU_045637_0_0_4"/>
<dbReference type="OrthoDB" id="9801549at2"/>
<dbReference type="UniPathway" id="UPA00074">
    <property type="reaction ID" value="UER00131"/>
</dbReference>
<dbReference type="Proteomes" id="UP000006552">
    <property type="component" value="Chromosome"/>
</dbReference>
<dbReference type="GO" id="GO:0005737">
    <property type="term" value="C:cytoplasm"/>
    <property type="evidence" value="ECO:0007669"/>
    <property type="project" value="TreeGrafter"/>
</dbReference>
<dbReference type="GO" id="GO:0005524">
    <property type="term" value="F:ATP binding"/>
    <property type="evidence" value="ECO:0007669"/>
    <property type="project" value="UniProtKB-KW"/>
</dbReference>
<dbReference type="GO" id="GO:0004639">
    <property type="term" value="F:phosphoribosylaminoimidazolesuccinocarboxamide synthase activity"/>
    <property type="evidence" value="ECO:0007669"/>
    <property type="project" value="UniProtKB-UniRule"/>
</dbReference>
<dbReference type="GO" id="GO:0006189">
    <property type="term" value="P:'de novo' IMP biosynthetic process"/>
    <property type="evidence" value="ECO:0007669"/>
    <property type="project" value="UniProtKB-UniRule"/>
</dbReference>
<dbReference type="CDD" id="cd01414">
    <property type="entry name" value="SAICAR_synt_Sc"/>
    <property type="match status" value="1"/>
</dbReference>
<dbReference type="FunFam" id="3.30.470.20:FF:000015">
    <property type="entry name" value="Phosphoribosylaminoimidazole-succinocarboxamide synthase"/>
    <property type="match status" value="1"/>
</dbReference>
<dbReference type="Gene3D" id="3.30.470.20">
    <property type="entry name" value="ATP-grasp fold, B domain"/>
    <property type="match status" value="1"/>
</dbReference>
<dbReference type="Gene3D" id="3.30.200.20">
    <property type="entry name" value="Phosphorylase Kinase, domain 1"/>
    <property type="match status" value="1"/>
</dbReference>
<dbReference type="HAMAP" id="MF_00137">
    <property type="entry name" value="SAICAR_synth"/>
    <property type="match status" value="1"/>
</dbReference>
<dbReference type="InterPro" id="IPR028923">
    <property type="entry name" value="SAICAR_synt/ADE2_N"/>
</dbReference>
<dbReference type="InterPro" id="IPR001636">
    <property type="entry name" value="SAICAR_synth"/>
</dbReference>
<dbReference type="InterPro" id="IPR018236">
    <property type="entry name" value="SAICAR_synthetase_CS"/>
</dbReference>
<dbReference type="NCBIfam" id="NF010568">
    <property type="entry name" value="PRK13961.1"/>
    <property type="match status" value="1"/>
</dbReference>
<dbReference type="NCBIfam" id="TIGR00081">
    <property type="entry name" value="purC"/>
    <property type="match status" value="1"/>
</dbReference>
<dbReference type="PANTHER" id="PTHR43700">
    <property type="entry name" value="PHOSPHORIBOSYLAMINOIMIDAZOLE-SUCCINOCARBOXAMIDE SYNTHASE"/>
    <property type="match status" value="1"/>
</dbReference>
<dbReference type="PANTHER" id="PTHR43700:SF1">
    <property type="entry name" value="PHOSPHORIBOSYLAMINOIMIDAZOLE-SUCCINOCARBOXAMIDE SYNTHASE"/>
    <property type="match status" value="1"/>
</dbReference>
<dbReference type="Pfam" id="PF01259">
    <property type="entry name" value="SAICAR_synt"/>
    <property type="match status" value="1"/>
</dbReference>
<dbReference type="SUPFAM" id="SSF56104">
    <property type="entry name" value="SAICAR synthase-like"/>
    <property type="match status" value="1"/>
</dbReference>
<dbReference type="PROSITE" id="PS01057">
    <property type="entry name" value="SAICAR_SYNTHETASE_1"/>
    <property type="match status" value="1"/>
</dbReference>
<dbReference type="PROSITE" id="PS01058">
    <property type="entry name" value="SAICAR_SYNTHETASE_2"/>
    <property type="match status" value="1"/>
</dbReference>
<feature type="chain" id="PRO_1000018664" description="Phosphoribosylaminoimidazole-succinocarboxamide synthase">
    <location>
        <begin position="1"/>
        <end position="311"/>
    </location>
</feature>
<accession>Q5P7J7</accession>